<sequence>MIEIDGSYGEGGGQLVRTAVALSAVTGEEIKVTNIRENRPNPGLKQQHLKALETAAKICGARVSGLSQGSSELFFAPVEIKGGKYNIDIGTAGSITLLLQCIMPALPFVEEKVELTIRGGTDVAWSPTIDYLKHVTLRALEQFGYAGSVTLKERGYYPRGGGSVSAVFEPCKLHGFHFRKTEGNKKTESNPVGEGLKGEKSMMEEIIGVSHASNLPAHVPARQAESARSLFLEAGYDARIDVSSSEFFSTGSGITLWKGYCGGSALGKKGLPAEKVGRQAAEEVIKELRAGAAVDIHLADQLIPYMALAGNSSFTVRELTLHAATNIWVTEQFLDVKFKIKEKEGLFEVSVG</sequence>
<protein>
    <recommendedName>
        <fullName evidence="1">RNA 3'-terminal phosphate cyclase</fullName>
        <shortName evidence="1">RNA cyclase</shortName>
        <shortName evidence="1">RNA-3'-phosphate cyclase</shortName>
        <ecNumber evidence="1">6.5.1.4</ecNumber>
    </recommendedName>
</protein>
<feature type="chain" id="PRO_0000156428" description="RNA 3'-terminal phosphate cyclase">
    <location>
        <begin position="1"/>
        <end position="352"/>
    </location>
</feature>
<feature type="active site" description="Tele-AMP-histidine intermediate" evidence="1">
    <location>
        <position position="322"/>
    </location>
</feature>
<feature type="binding site" evidence="1">
    <location>
        <position position="100"/>
    </location>
    <ligand>
        <name>ATP</name>
        <dbReference type="ChEBI" id="CHEBI:30616"/>
    </ligand>
</feature>
<feature type="binding site" evidence="1">
    <location>
        <begin position="297"/>
        <end position="301"/>
    </location>
    <ligand>
        <name>ATP</name>
        <dbReference type="ChEBI" id="CHEBI:30616"/>
    </ligand>
</feature>
<dbReference type="EC" id="6.5.1.4" evidence="1"/>
<dbReference type="EMBL" id="AE008384">
    <property type="protein sequence ID" value="AAM30993.1"/>
    <property type="molecule type" value="Genomic_DNA"/>
</dbReference>
<dbReference type="RefSeq" id="WP_011033244.1">
    <property type="nucleotide sequence ID" value="NC_003901.1"/>
</dbReference>
<dbReference type="SMR" id="Q8PXC4"/>
<dbReference type="GeneID" id="82160337"/>
<dbReference type="KEGG" id="mma:MM_1297"/>
<dbReference type="PATRIC" id="fig|192952.21.peg.1508"/>
<dbReference type="eggNOG" id="arCOG04125">
    <property type="taxonomic scope" value="Archaea"/>
</dbReference>
<dbReference type="HOGENOM" id="CLU_027882_0_0_2"/>
<dbReference type="Proteomes" id="UP000000595">
    <property type="component" value="Chromosome"/>
</dbReference>
<dbReference type="GO" id="GO:0005737">
    <property type="term" value="C:cytoplasm"/>
    <property type="evidence" value="ECO:0007669"/>
    <property type="project" value="UniProtKB-SubCell"/>
</dbReference>
<dbReference type="GO" id="GO:0005524">
    <property type="term" value="F:ATP binding"/>
    <property type="evidence" value="ECO:0007669"/>
    <property type="project" value="UniProtKB-KW"/>
</dbReference>
<dbReference type="GO" id="GO:0003963">
    <property type="term" value="F:RNA-3'-phosphate cyclase activity"/>
    <property type="evidence" value="ECO:0007669"/>
    <property type="project" value="UniProtKB-UniRule"/>
</dbReference>
<dbReference type="GO" id="GO:0006396">
    <property type="term" value="P:RNA processing"/>
    <property type="evidence" value="ECO:0007669"/>
    <property type="project" value="InterPro"/>
</dbReference>
<dbReference type="CDD" id="cd00874">
    <property type="entry name" value="RNA_Cyclase_Class_II"/>
    <property type="match status" value="1"/>
</dbReference>
<dbReference type="Gene3D" id="3.65.10.20">
    <property type="entry name" value="RNA 3'-terminal phosphate cyclase domain"/>
    <property type="match status" value="1"/>
</dbReference>
<dbReference type="Gene3D" id="3.30.360.20">
    <property type="entry name" value="RNA 3'-terminal phosphate cyclase, insert domain"/>
    <property type="match status" value="1"/>
</dbReference>
<dbReference type="HAMAP" id="MF_00200">
    <property type="entry name" value="RTC"/>
    <property type="match status" value="1"/>
</dbReference>
<dbReference type="InterPro" id="IPR013791">
    <property type="entry name" value="RNA3'-term_phos_cycl_insert"/>
</dbReference>
<dbReference type="InterPro" id="IPR023797">
    <property type="entry name" value="RNA3'_phos_cyclase_dom"/>
</dbReference>
<dbReference type="InterPro" id="IPR037136">
    <property type="entry name" value="RNA3'_phos_cyclase_dom_sf"/>
</dbReference>
<dbReference type="InterPro" id="IPR000228">
    <property type="entry name" value="RNA3'_term_phos_cyc"/>
</dbReference>
<dbReference type="InterPro" id="IPR017770">
    <property type="entry name" value="RNA3'_term_phos_cyc_type_1"/>
</dbReference>
<dbReference type="InterPro" id="IPR020719">
    <property type="entry name" value="RNA3'_term_phos_cycl-like_CS"/>
</dbReference>
<dbReference type="InterPro" id="IPR013792">
    <property type="entry name" value="RNA3'P_cycl/enolpyr_Trfase_a/b"/>
</dbReference>
<dbReference type="InterPro" id="IPR036553">
    <property type="entry name" value="RPTC_insert"/>
</dbReference>
<dbReference type="NCBIfam" id="TIGR03399">
    <property type="entry name" value="RNA_3prim_cycl"/>
    <property type="match status" value="1"/>
</dbReference>
<dbReference type="PANTHER" id="PTHR11096">
    <property type="entry name" value="RNA 3' TERMINAL PHOSPHATE CYCLASE"/>
    <property type="match status" value="1"/>
</dbReference>
<dbReference type="PANTHER" id="PTHR11096:SF0">
    <property type="entry name" value="RNA 3'-TERMINAL PHOSPHATE CYCLASE"/>
    <property type="match status" value="1"/>
</dbReference>
<dbReference type="Pfam" id="PF01137">
    <property type="entry name" value="RTC"/>
    <property type="match status" value="1"/>
</dbReference>
<dbReference type="Pfam" id="PF05189">
    <property type="entry name" value="RTC_insert"/>
    <property type="match status" value="1"/>
</dbReference>
<dbReference type="PIRSF" id="PIRSF005378">
    <property type="entry name" value="RNA3'_term_phos_cycl_euk"/>
    <property type="match status" value="1"/>
</dbReference>
<dbReference type="SUPFAM" id="SSF55205">
    <property type="entry name" value="EPT/RTPC-like"/>
    <property type="match status" value="2"/>
</dbReference>
<dbReference type="SUPFAM" id="SSF52913">
    <property type="entry name" value="RNA 3'-terminal phosphate cyclase, RPTC, insert domain"/>
    <property type="match status" value="1"/>
</dbReference>
<dbReference type="PROSITE" id="PS01287">
    <property type="entry name" value="RTC"/>
    <property type="match status" value="1"/>
</dbReference>
<evidence type="ECO:0000255" key="1">
    <source>
        <dbReference type="HAMAP-Rule" id="MF_00200"/>
    </source>
</evidence>
<gene>
    <name evidence="1" type="primary">rtcA</name>
    <name type="ordered locus">MM_1297</name>
</gene>
<organism>
    <name type="scientific">Methanosarcina mazei (strain ATCC BAA-159 / DSM 3647 / Goe1 / Go1 / JCM 11833 / OCM 88)</name>
    <name type="common">Methanosarcina frisia</name>
    <dbReference type="NCBI Taxonomy" id="192952"/>
    <lineage>
        <taxon>Archaea</taxon>
        <taxon>Methanobacteriati</taxon>
        <taxon>Methanobacteriota</taxon>
        <taxon>Stenosarchaea group</taxon>
        <taxon>Methanomicrobia</taxon>
        <taxon>Methanosarcinales</taxon>
        <taxon>Methanosarcinaceae</taxon>
        <taxon>Methanosarcina</taxon>
    </lineage>
</organism>
<keyword id="KW-0067">ATP-binding</keyword>
<keyword id="KW-0963">Cytoplasm</keyword>
<keyword id="KW-0436">Ligase</keyword>
<keyword id="KW-0547">Nucleotide-binding</keyword>
<comment type="function">
    <text evidence="1">Catalyzes the conversion of 3'-phosphate to a 2',3'-cyclic phosphodiester at the end of RNA. The mechanism of action of the enzyme occurs in 3 steps: (A) adenylation of the enzyme by ATP; (B) transfer of adenylate to an RNA-N3'P to produce RNA-N3'PP5'A; (C) and attack of the adjacent 2'-hydroxyl on the 3'-phosphorus in the diester linkage to produce the cyclic end product. The biological role of this enzyme is unknown but it is likely to function in some aspects of cellular RNA processing.</text>
</comment>
<comment type="catalytic activity">
    <reaction evidence="1">
        <text>a 3'-end 3'-phospho-ribonucleotide-RNA + ATP = a 3'-end 2',3'-cyclophospho-ribonucleotide-RNA + AMP + diphosphate</text>
        <dbReference type="Rhea" id="RHEA:23976"/>
        <dbReference type="Rhea" id="RHEA-COMP:10463"/>
        <dbReference type="Rhea" id="RHEA-COMP:10464"/>
        <dbReference type="ChEBI" id="CHEBI:30616"/>
        <dbReference type="ChEBI" id="CHEBI:33019"/>
        <dbReference type="ChEBI" id="CHEBI:83062"/>
        <dbReference type="ChEBI" id="CHEBI:83064"/>
        <dbReference type="ChEBI" id="CHEBI:456215"/>
        <dbReference type="EC" id="6.5.1.4"/>
    </reaction>
</comment>
<comment type="subcellular location">
    <subcellularLocation>
        <location evidence="1">Cytoplasm</location>
    </subcellularLocation>
</comment>
<comment type="similarity">
    <text evidence="1">Belongs to the RNA 3'-terminal cyclase family. Type 1 subfamily.</text>
</comment>
<proteinExistence type="inferred from homology"/>
<reference key="1">
    <citation type="journal article" date="2002" name="J. Mol. Microbiol. Biotechnol.">
        <title>The genome of Methanosarcina mazei: evidence for lateral gene transfer between Bacteria and Archaea.</title>
        <authorList>
            <person name="Deppenmeier U."/>
            <person name="Johann A."/>
            <person name="Hartsch T."/>
            <person name="Merkl R."/>
            <person name="Schmitz R.A."/>
            <person name="Martinez-Arias R."/>
            <person name="Henne A."/>
            <person name="Wiezer A."/>
            <person name="Baeumer S."/>
            <person name="Jacobi C."/>
            <person name="Brueggemann H."/>
            <person name="Lienard T."/>
            <person name="Christmann A."/>
            <person name="Boemecke M."/>
            <person name="Steckel S."/>
            <person name="Bhattacharyya A."/>
            <person name="Lykidis A."/>
            <person name="Overbeek R."/>
            <person name="Klenk H.-P."/>
            <person name="Gunsalus R.P."/>
            <person name="Fritz H.-J."/>
            <person name="Gottschalk G."/>
        </authorList>
    </citation>
    <scope>NUCLEOTIDE SEQUENCE [LARGE SCALE GENOMIC DNA]</scope>
    <source>
        <strain>ATCC BAA-159 / DSM 3647 / Goe1 / Go1 / JCM 11833 / OCM 88</strain>
    </source>
</reference>
<accession>Q8PXC4</accession>
<name>RTCA_METMA</name>